<reference key="1">
    <citation type="journal article" date="1997" name="Gen. Comp. Endocrinol.">
        <title>Molecular cloning of the cDNAs encoding two gonadotropin beta subunits (GTH-I beta and -II beta) from the goldfish, Carassius auratus.</title>
        <authorList>
            <person name="Yoshiura Y."/>
            <person name="Kobayashi M."/>
            <person name="Kato Y."/>
            <person name="Aida K."/>
        </authorList>
    </citation>
    <scope>NUCLEOTIDE SEQUENCE [MRNA]</scope>
    <source>
        <tissue>Pituitary</tissue>
    </source>
</reference>
<reference key="2">
    <citation type="journal article" date="1998" name="Gene">
        <title>Structural and expression analyses of gonadotropin Ibeta subunit genes in goldfish (Carassius auratus).</title>
        <authorList>
            <person name="Sohn Y.C."/>
            <person name="Suetake H."/>
            <person name="Yoshiura Y."/>
            <person name="Kobayashi M."/>
            <person name="Aida K."/>
        </authorList>
    </citation>
    <scope>NUCLEOTIDE SEQUENCE [GENOMIC DNA]</scope>
</reference>
<gene>
    <name type="primary">cgba</name>
</gene>
<feature type="signal peptide" evidence="2">
    <location>
        <begin position="1"/>
        <end position="18"/>
    </location>
</feature>
<feature type="chain" id="PRO_0000011681" description="Gonadotropin subunit beta-1">
    <location>
        <begin position="19"/>
        <end position="130"/>
    </location>
</feature>
<feature type="glycosylation site" description="N-linked (GlcNAc...) asparagine" evidence="2">
    <location>
        <position position="30"/>
    </location>
</feature>
<feature type="disulfide bond" evidence="1">
    <location>
        <begin position="26"/>
        <end position="74"/>
    </location>
</feature>
<feature type="disulfide bond" evidence="1">
    <location>
        <begin position="40"/>
        <end position="89"/>
    </location>
</feature>
<feature type="disulfide bond" evidence="1">
    <location>
        <begin position="51"/>
        <end position="105"/>
    </location>
</feature>
<feature type="disulfide bond" evidence="1">
    <location>
        <begin position="55"/>
        <end position="107"/>
    </location>
</feature>
<feature type="disulfide bond" evidence="1">
    <location>
        <begin position="110"/>
        <end position="117"/>
    </location>
</feature>
<name>GTHB1_CARAU</name>
<comment type="function">
    <text>Involved in gametogenesis and steroidogenesis.</text>
</comment>
<comment type="subunit">
    <text>Heterodimer of an alpha and a beta chain.</text>
</comment>
<comment type="subcellular location">
    <subcellularLocation>
        <location>Secreted</location>
    </subcellularLocation>
</comment>
<comment type="similarity">
    <text evidence="3">Belongs to the glycoprotein hormones subunit beta family.</text>
</comment>
<organism>
    <name type="scientific">Carassius auratus</name>
    <name type="common">Goldfish</name>
    <dbReference type="NCBI Taxonomy" id="7957"/>
    <lineage>
        <taxon>Eukaryota</taxon>
        <taxon>Metazoa</taxon>
        <taxon>Chordata</taxon>
        <taxon>Craniata</taxon>
        <taxon>Vertebrata</taxon>
        <taxon>Euteleostomi</taxon>
        <taxon>Actinopterygii</taxon>
        <taxon>Neopterygii</taxon>
        <taxon>Teleostei</taxon>
        <taxon>Ostariophysi</taxon>
        <taxon>Cypriniformes</taxon>
        <taxon>Cyprinidae</taxon>
        <taxon>Cyprininae</taxon>
        <taxon>Carassius</taxon>
    </lineage>
</organism>
<accession>Q98848</accession>
<sequence>MRMRFVVMVILLPALMMSGSECRSSCRLTNISITVESEECGSCITIDTTACAGLCKTQESVYRSPLMLSYQNTCNFREWTYETYEFKGCPARADSIFTYPVALSCECSKCNSDITDCGVLSQQTLGCNAH</sequence>
<dbReference type="EMBL" id="D88023">
    <property type="protein sequence ID" value="BAA13530.1"/>
    <property type="molecule type" value="mRNA"/>
</dbReference>
<dbReference type="EMBL" id="AB015482">
    <property type="protein sequence ID" value="BAA36974.1"/>
    <property type="molecule type" value="Genomic_DNA"/>
</dbReference>
<dbReference type="SMR" id="Q98848"/>
<dbReference type="GlyCosmos" id="Q98848">
    <property type="glycosylation" value="1 site, No reported glycans"/>
</dbReference>
<dbReference type="OrthoDB" id="8903627at2759"/>
<dbReference type="Proteomes" id="UP000515129">
    <property type="component" value="Unplaced"/>
</dbReference>
<dbReference type="GO" id="GO:0005737">
    <property type="term" value="C:cytoplasm"/>
    <property type="evidence" value="ECO:0007669"/>
    <property type="project" value="TreeGrafter"/>
</dbReference>
<dbReference type="GO" id="GO:0005615">
    <property type="term" value="C:extracellular space"/>
    <property type="evidence" value="ECO:0007669"/>
    <property type="project" value="TreeGrafter"/>
</dbReference>
<dbReference type="GO" id="GO:0005179">
    <property type="term" value="F:hormone activity"/>
    <property type="evidence" value="ECO:0007669"/>
    <property type="project" value="UniProtKB-KW"/>
</dbReference>
<dbReference type="GO" id="GO:0007186">
    <property type="term" value="P:G protein-coupled receptor signaling pathway"/>
    <property type="evidence" value="ECO:0007669"/>
    <property type="project" value="TreeGrafter"/>
</dbReference>
<dbReference type="GO" id="GO:0030728">
    <property type="term" value="P:ovulation"/>
    <property type="evidence" value="ECO:0007669"/>
    <property type="project" value="TreeGrafter"/>
</dbReference>
<dbReference type="CDD" id="cd00069">
    <property type="entry name" value="GHB_like"/>
    <property type="match status" value="1"/>
</dbReference>
<dbReference type="FunFam" id="2.10.90.10:FF:000007">
    <property type="entry name" value="Luteinizing hormone beta subunit"/>
    <property type="match status" value="1"/>
</dbReference>
<dbReference type="Gene3D" id="2.10.90.10">
    <property type="entry name" value="Cystine-knot cytokines"/>
    <property type="match status" value="1"/>
</dbReference>
<dbReference type="InterPro" id="IPR029034">
    <property type="entry name" value="Cystine-knot_cytokine"/>
</dbReference>
<dbReference type="InterPro" id="IPR006208">
    <property type="entry name" value="Glyco_hormone_CN"/>
</dbReference>
<dbReference type="InterPro" id="IPR001545">
    <property type="entry name" value="Gonadotropin_bsu"/>
</dbReference>
<dbReference type="InterPro" id="IPR018245">
    <property type="entry name" value="Gonadotropin_bsu_CS"/>
</dbReference>
<dbReference type="PANTHER" id="PTHR11515">
    <property type="entry name" value="GLYCOPROTEIN HORMONE BETA CHAIN"/>
    <property type="match status" value="1"/>
</dbReference>
<dbReference type="PANTHER" id="PTHR11515:SF11">
    <property type="entry name" value="LUTROPIN SUBUNIT BETA"/>
    <property type="match status" value="1"/>
</dbReference>
<dbReference type="Pfam" id="PF00007">
    <property type="entry name" value="Cys_knot"/>
    <property type="match status" value="1"/>
</dbReference>
<dbReference type="SMART" id="SM00068">
    <property type="entry name" value="GHB"/>
    <property type="match status" value="1"/>
</dbReference>
<dbReference type="SUPFAM" id="SSF57501">
    <property type="entry name" value="Cystine-knot cytokines"/>
    <property type="match status" value="1"/>
</dbReference>
<dbReference type="PROSITE" id="PS00261">
    <property type="entry name" value="GLYCO_HORMONE_BETA_1"/>
    <property type="match status" value="1"/>
</dbReference>
<dbReference type="PROSITE" id="PS00689">
    <property type="entry name" value="GLYCO_HORMONE_BETA_2"/>
    <property type="match status" value="1"/>
</dbReference>
<evidence type="ECO:0000250" key="1"/>
<evidence type="ECO:0000255" key="2"/>
<evidence type="ECO:0000305" key="3"/>
<proteinExistence type="evidence at transcript level"/>
<keyword id="KW-1015">Disulfide bond</keyword>
<keyword id="KW-0325">Glycoprotein</keyword>
<keyword id="KW-0372">Hormone</keyword>
<keyword id="KW-1185">Reference proteome</keyword>
<keyword id="KW-0964">Secreted</keyword>
<keyword id="KW-0732">Signal</keyword>
<protein>
    <recommendedName>
        <fullName>Gonadotropin subunit beta-1</fullName>
    </recommendedName>
    <alternativeName>
        <fullName>Follicle-stimulating hormone-like GTH</fullName>
    </alternativeName>
    <alternativeName>
        <fullName>GTH-I-beta</fullName>
    </alternativeName>
    <alternativeName>
        <fullName>Gonadotropin beta-I chain</fullName>
    </alternativeName>
</protein>